<evidence type="ECO:0000255" key="1">
    <source>
        <dbReference type="HAMAP-Rule" id="MF_01456"/>
    </source>
</evidence>
<comment type="function">
    <text evidence="1">NDH-1 shuttles electrons from NADH, via FMN and iron-sulfur (Fe-S) centers, to quinones in the respiratory chain. The immediate electron acceptor for the enzyme in this species is believed to be a menaquinone. Couples the redox reaction to proton translocation (for every two electrons transferred, four hydrogen ions are translocated across the cytoplasmic membrane), and thus conserves the redox energy in a proton gradient.</text>
</comment>
<comment type="catalytic activity">
    <reaction evidence="1">
        <text>a quinone + NADH + 5 H(+)(in) = a quinol + NAD(+) + 4 H(+)(out)</text>
        <dbReference type="Rhea" id="RHEA:57888"/>
        <dbReference type="ChEBI" id="CHEBI:15378"/>
        <dbReference type="ChEBI" id="CHEBI:24646"/>
        <dbReference type="ChEBI" id="CHEBI:57540"/>
        <dbReference type="ChEBI" id="CHEBI:57945"/>
        <dbReference type="ChEBI" id="CHEBI:132124"/>
    </reaction>
</comment>
<comment type="subunit">
    <text evidence="1">NDH-1 is composed of 14 different subunits. Subunits NuoA, H, J, K, L, M, N constitute the membrane sector of the complex.</text>
</comment>
<comment type="subcellular location">
    <subcellularLocation>
        <location evidence="1">Cell membrane</location>
        <topology evidence="1">Multi-pass membrane protein</topology>
    </subcellularLocation>
</comment>
<comment type="similarity">
    <text evidence="1">Belongs to the complex I subunit 4L family.</text>
</comment>
<name>NUOK_BACCZ</name>
<feature type="chain" id="PRO_0000389948" description="NADH-quinone oxidoreductase subunit K">
    <location>
        <begin position="1"/>
        <end position="104"/>
    </location>
</feature>
<feature type="transmembrane region" description="Helical" evidence="1">
    <location>
        <begin position="4"/>
        <end position="24"/>
    </location>
</feature>
<feature type="transmembrane region" description="Helical" evidence="1">
    <location>
        <begin position="31"/>
        <end position="51"/>
    </location>
</feature>
<feature type="transmembrane region" description="Helical" evidence="1">
    <location>
        <begin position="67"/>
        <end position="87"/>
    </location>
</feature>
<keyword id="KW-1003">Cell membrane</keyword>
<keyword id="KW-0472">Membrane</keyword>
<keyword id="KW-0520">NAD</keyword>
<keyword id="KW-0874">Quinone</keyword>
<keyword id="KW-1278">Translocase</keyword>
<keyword id="KW-0812">Transmembrane</keyword>
<keyword id="KW-1133">Transmembrane helix</keyword>
<keyword id="KW-0813">Transport</keyword>
<dbReference type="EC" id="7.1.1.-" evidence="1"/>
<dbReference type="EMBL" id="CP000001">
    <property type="protein sequence ID" value="AAU15287.1"/>
    <property type="molecule type" value="Genomic_DNA"/>
</dbReference>
<dbReference type="RefSeq" id="WP_000100082.1">
    <property type="nucleotide sequence ID" value="NZ_CP009968.1"/>
</dbReference>
<dbReference type="SMR" id="Q630V5"/>
<dbReference type="GeneID" id="75088479"/>
<dbReference type="KEGG" id="bcz:BCE33L4993"/>
<dbReference type="PATRIC" id="fig|288681.22.peg.353"/>
<dbReference type="Proteomes" id="UP000002612">
    <property type="component" value="Chromosome"/>
</dbReference>
<dbReference type="GO" id="GO:0030964">
    <property type="term" value="C:NADH dehydrogenase complex"/>
    <property type="evidence" value="ECO:0007669"/>
    <property type="project" value="TreeGrafter"/>
</dbReference>
<dbReference type="GO" id="GO:0005886">
    <property type="term" value="C:plasma membrane"/>
    <property type="evidence" value="ECO:0007669"/>
    <property type="project" value="UniProtKB-SubCell"/>
</dbReference>
<dbReference type="GO" id="GO:0050136">
    <property type="term" value="F:NADH:ubiquinone reductase (non-electrogenic) activity"/>
    <property type="evidence" value="ECO:0007669"/>
    <property type="project" value="UniProtKB-UniRule"/>
</dbReference>
<dbReference type="GO" id="GO:0048038">
    <property type="term" value="F:quinone binding"/>
    <property type="evidence" value="ECO:0007669"/>
    <property type="project" value="UniProtKB-KW"/>
</dbReference>
<dbReference type="GO" id="GO:0042773">
    <property type="term" value="P:ATP synthesis coupled electron transport"/>
    <property type="evidence" value="ECO:0007669"/>
    <property type="project" value="InterPro"/>
</dbReference>
<dbReference type="FunFam" id="1.10.287.3510:FF:000001">
    <property type="entry name" value="NADH-quinone oxidoreductase subunit K"/>
    <property type="match status" value="1"/>
</dbReference>
<dbReference type="Gene3D" id="1.10.287.3510">
    <property type="match status" value="1"/>
</dbReference>
<dbReference type="HAMAP" id="MF_01456">
    <property type="entry name" value="NDH1_NuoK"/>
    <property type="match status" value="1"/>
</dbReference>
<dbReference type="InterPro" id="IPR001133">
    <property type="entry name" value="NADH_UbQ_OxRdtase_chain4L/K"/>
</dbReference>
<dbReference type="InterPro" id="IPR039428">
    <property type="entry name" value="NUOK/Mnh_C1-like"/>
</dbReference>
<dbReference type="NCBIfam" id="NF004320">
    <property type="entry name" value="PRK05715.1-2"/>
    <property type="match status" value="1"/>
</dbReference>
<dbReference type="NCBIfam" id="NF004321">
    <property type="entry name" value="PRK05715.1-3"/>
    <property type="match status" value="1"/>
</dbReference>
<dbReference type="NCBIfam" id="NF004322">
    <property type="entry name" value="PRK05715.1-4"/>
    <property type="match status" value="1"/>
</dbReference>
<dbReference type="NCBIfam" id="NF004323">
    <property type="entry name" value="PRK05715.1-5"/>
    <property type="match status" value="1"/>
</dbReference>
<dbReference type="PANTHER" id="PTHR11434:SF16">
    <property type="entry name" value="NADH-UBIQUINONE OXIDOREDUCTASE CHAIN 4L"/>
    <property type="match status" value="1"/>
</dbReference>
<dbReference type="PANTHER" id="PTHR11434">
    <property type="entry name" value="NADH-UBIQUINONE OXIDOREDUCTASE SUBUNIT ND4L"/>
    <property type="match status" value="1"/>
</dbReference>
<dbReference type="Pfam" id="PF00420">
    <property type="entry name" value="Oxidored_q2"/>
    <property type="match status" value="1"/>
</dbReference>
<organism>
    <name type="scientific">Bacillus cereus (strain ZK / E33L)</name>
    <dbReference type="NCBI Taxonomy" id="288681"/>
    <lineage>
        <taxon>Bacteria</taxon>
        <taxon>Bacillati</taxon>
        <taxon>Bacillota</taxon>
        <taxon>Bacilli</taxon>
        <taxon>Bacillales</taxon>
        <taxon>Bacillaceae</taxon>
        <taxon>Bacillus</taxon>
        <taxon>Bacillus cereus group</taxon>
    </lineage>
</organism>
<accession>Q630V5</accession>
<protein>
    <recommendedName>
        <fullName evidence="1">NADH-quinone oxidoreductase subunit K</fullName>
        <ecNumber evidence="1">7.1.1.-</ecNumber>
    </recommendedName>
    <alternativeName>
        <fullName evidence="1">NADH dehydrogenase I subunit K</fullName>
    </alternativeName>
    <alternativeName>
        <fullName evidence="1">NDH-1 subunit K</fullName>
    </alternativeName>
</protein>
<proteinExistence type="inferred from homology"/>
<gene>
    <name evidence="1" type="primary">nuoK</name>
    <name type="ordered locus">BCE33L4993</name>
</gene>
<reference key="1">
    <citation type="journal article" date="2006" name="J. Bacteriol.">
        <title>Pathogenomic sequence analysis of Bacillus cereus and Bacillus thuringiensis isolates closely related to Bacillus anthracis.</title>
        <authorList>
            <person name="Han C.S."/>
            <person name="Xie G."/>
            <person name="Challacombe J.F."/>
            <person name="Altherr M.R."/>
            <person name="Bhotika S.S."/>
            <person name="Bruce D."/>
            <person name="Campbell C.S."/>
            <person name="Campbell M.L."/>
            <person name="Chen J."/>
            <person name="Chertkov O."/>
            <person name="Cleland C."/>
            <person name="Dimitrijevic M."/>
            <person name="Doggett N.A."/>
            <person name="Fawcett J.J."/>
            <person name="Glavina T."/>
            <person name="Goodwin L.A."/>
            <person name="Hill K.K."/>
            <person name="Hitchcock P."/>
            <person name="Jackson P.J."/>
            <person name="Keim P."/>
            <person name="Kewalramani A.R."/>
            <person name="Longmire J."/>
            <person name="Lucas S."/>
            <person name="Malfatti S."/>
            <person name="McMurry K."/>
            <person name="Meincke L.J."/>
            <person name="Misra M."/>
            <person name="Moseman B.L."/>
            <person name="Mundt M."/>
            <person name="Munk A.C."/>
            <person name="Okinaka R.T."/>
            <person name="Parson-Quintana B."/>
            <person name="Reilly L.P."/>
            <person name="Richardson P."/>
            <person name="Robinson D.L."/>
            <person name="Rubin E."/>
            <person name="Saunders E."/>
            <person name="Tapia R."/>
            <person name="Tesmer J.G."/>
            <person name="Thayer N."/>
            <person name="Thompson L.S."/>
            <person name="Tice H."/>
            <person name="Ticknor L.O."/>
            <person name="Wills P.L."/>
            <person name="Brettin T.S."/>
            <person name="Gilna P."/>
        </authorList>
    </citation>
    <scope>NUCLEOTIDE SEQUENCE [LARGE SCALE GENOMIC DNA]</scope>
    <source>
        <strain>ZK / E33L</strain>
    </source>
</reference>
<sequence length="104" mass="11046">MSSVPASAYLTLAIILFCIGLFGALTKRNTVIVLVCIELMLNAANLNLVAFSKLGLFPNVTGQIFSLFTMAVAAAEAAVGLAILIALYRNRTTVHVDEMDTLKG</sequence>